<keyword id="KW-0030">Aminoacyl-tRNA synthetase</keyword>
<keyword id="KW-0067">ATP-binding</keyword>
<keyword id="KW-0963">Cytoplasm</keyword>
<keyword id="KW-0436">Ligase</keyword>
<keyword id="KW-0547">Nucleotide-binding</keyword>
<keyword id="KW-0648">Protein biosynthesis</keyword>
<keyword id="KW-1185">Reference proteome</keyword>
<evidence type="ECO:0000255" key="1">
    <source>
        <dbReference type="HAMAP-Rule" id="MF_00176"/>
    </source>
</evidence>
<name>SYS_HYPNA</name>
<accession>Q0C0W2</accession>
<gene>
    <name evidence="1" type="primary">serS</name>
    <name type="ordered locus">HNE_1930</name>
</gene>
<proteinExistence type="inferred from homology"/>
<dbReference type="EC" id="6.1.1.11" evidence="1"/>
<dbReference type="EMBL" id="CP000158">
    <property type="protein sequence ID" value="ABI78739.1"/>
    <property type="molecule type" value="Genomic_DNA"/>
</dbReference>
<dbReference type="RefSeq" id="WP_011646931.1">
    <property type="nucleotide sequence ID" value="NC_008358.1"/>
</dbReference>
<dbReference type="SMR" id="Q0C0W2"/>
<dbReference type="STRING" id="228405.HNE_1930"/>
<dbReference type="KEGG" id="hne:HNE_1930"/>
<dbReference type="eggNOG" id="COG0172">
    <property type="taxonomic scope" value="Bacteria"/>
</dbReference>
<dbReference type="HOGENOM" id="CLU_023797_1_1_5"/>
<dbReference type="UniPathway" id="UPA00906">
    <property type="reaction ID" value="UER00895"/>
</dbReference>
<dbReference type="Proteomes" id="UP000001959">
    <property type="component" value="Chromosome"/>
</dbReference>
<dbReference type="GO" id="GO:0005737">
    <property type="term" value="C:cytoplasm"/>
    <property type="evidence" value="ECO:0007669"/>
    <property type="project" value="UniProtKB-SubCell"/>
</dbReference>
<dbReference type="GO" id="GO:0005524">
    <property type="term" value="F:ATP binding"/>
    <property type="evidence" value="ECO:0007669"/>
    <property type="project" value="UniProtKB-UniRule"/>
</dbReference>
<dbReference type="GO" id="GO:0004828">
    <property type="term" value="F:serine-tRNA ligase activity"/>
    <property type="evidence" value="ECO:0007669"/>
    <property type="project" value="UniProtKB-UniRule"/>
</dbReference>
<dbReference type="GO" id="GO:0016260">
    <property type="term" value="P:selenocysteine biosynthetic process"/>
    <property type="evidence" value="ECO:0007669"/>
    <property type="project" value="UniProtKB-UniRule"/>
</dbReference>
<dbReference type="GO" id="GO:0006434">
    <property type="term" value="P:seryl-tRNA aminoacylation"/>
    <property type="evidence" value="ECO:0007669"/>
    <property type="project" value="UniProtKB-UniRule"/>
</dbReference>
<dbReference type="CDD" id="cd00770">
    <property type="entry name" value="SerRS_core"/>
    <property type="match status" value="1"/>
</dbReference>
<dbReference type="Gene3D" id="3.30.930.10">
    <property type="entry name" value="Bira Bifunctional Protein, Domain 2"/>
    <property type="match status" value="1"/>
</dbReference>
<dbReference type="Gene3D" id="1.10.287.40">
    <property type="entry name" value="Serine-tRNA synthetase, tRNA binding domain"/>
    <property type="match status" value="1"/>
</dbReference>
<dbReference type="HAMAP" id="MF_00176">
    <property type="entry name" value="Ser_tRNA_synth_type1"/>
    <property type="match status" value="1"/>
</dbReference>
<dbReference type="InterPro" id="IPR002314">
    <property type="entry name" value="aa-tRNA-synt_IIb"/>
</dbReference>
<dbReference type="InterPro" id="IPR006195">
    <property type="entry name" value="aa-tRNA-synth_II"/>
</dbReference>
<dbReference type="InterPro" id="IPR045864">
    <property type="entry name" value="aa-tRNA-synth_II/BPL/LPL"/>
</dbReference>
<dbReference type="InterPro" id="IPR002317">
    <property type="entry name" value="Ser-tRNA-ligase_type_1"/>
</dbReference>
<dbReference type="InterPro" id="IPR015866">
    <property type="entry name" value="Ser-tRNA-synth_1_N"/>
</dbReference>
<dbReference type="InterPro" id="IPR042103">
    <property type="entry name" value="SerRS_1_N_sf"/>
</dbReference>
<dbReference type="InterPro" id="IPR033729">
    <property type="entry name" value="SerRS_core"/>
</dbReference>
<dbReference type="InterPro" id="IPR010978">
    <property type="entry name" value="tRNA-bd_arm"/>
</dbReference>
<dbReference type="NCBIfam" id="TIGR00414">
    <property type="entry name" value="serS"/>
    <property type="match status" value="1"/>
</dbReference>
<dbReference type="PANTHER" id="PTHR43697:SF1">
    <property type="entry name" value="SERINE--TRNA LIGASE"/>
    <property type="match status" value="1"/>
</dbReference>
<dbReference type="PANTHER" id="PTHR43697">
    <property type="entry name" value="SERYL-TRNA SYNTHETASE"/>
    <property type="match status" value="1"/>
</dbReference>
<dbReference type="Pfam" id="PF02403">
    <property type="entry name" value="Seryl_tRNA_N"/>
    <property type="match status" value="1"/>
</dbReference>
<dbReference type="Pfam" id="PF00587">
    <property type="entry name" value="tRNA-synt_2b"/>
    <property type="match status" value="1"/>
</dbReference>
<dbReference type="PIRSF" id="PIRSF001529">
    <property type="entry name" value="Ser-tRNA-synth_IIa"/>
    <property type="match status" value="1"/>
</dbReference>
<dbReference type="PRINTS" id="PR00981">
    <property type="entry name" value="TRNASYNTHSER"/>
</dbReference>
<dbReference type="SUPFAM" id="SSF55681">
    <property type="entry name" value="Class II aaRS and biotin synthetases"/>
    <property type="match status" value="1"/>
</dbReference>
<dbReference type="SUPFAM" id="SSF46589">
    <property type="entry name" value="tRNA-binding arm"/>
    <property type="match status" value="1"/>
</dbReference>
<dbReference type="PROSITE" id="PS50862">
    <property type="entry name" value="AA_TRNA_LIGASE_II"/>
    <property type="match status" value="1"/>
</dbReference>
<comment type="function">
    <text evidence="1">Catalyzes the attachment of serine to tRNA(Ser). Is also able to aminoacylate tRNA(Sec) with serine, to form the misacylated tRNA L-seryl-tRNA(Sec), which will be further converted into selenocysteinyl-tRNA(Sec).</text>
</comment>
<comment type="catalytic activity">
    <reaction evidence="1">
        <text>tRNA(Ser) + L-serine + ATP = L-seryl-tRNA(Ser) + AMP + diphosphate + H(+)</text>
        <dbReference type="Rhea" id="RHEA:12292"/>
        <dbReference type="Rhea" id="RHEA-COMP:9669"/>
        <dbReference type="Rhea" id="RHEA-COMP:9703"/>
        <dbReference type="ChEBI" id="CHEBI:15378"/>
        <dbReference type="ChEBI" id="CHEBI:30616"/>
        <dbReference type="ChEBI" id="CHEBI:33019"/>
        <dbReference type="ChEBI" id="CHEBI:33384"/>
        <dbReference type="ChEBI" id="CHEBI:78442"/>
        <dbReference type="ChEBI" id="CHEBI:78533"/>
        <dbReference type="ChEBI" id="CHEBI:456215"/>
        <dbReference type="EC" id="6.1.1.11"/>
    </reaction>
</comment>
<comment type="catalytic activity">
    <reaction evidence="1">
        <text>tRNA(Sec) + L-serine + ATP = L-seryl-tRNA(Sec) + AMP + diphosphate + H(+)</text>
        <dbReference type="Rhea" id="RHEA:42580"/>
        <dbReference type="Rhea" id="RHEA-COMP:9742"/>
        <dbReference type="Rhea" id="RHEA-COMP:10128"/>
        <dbReference type="ChEBI" id="CHEBI:15378"/>
        <dbReference type="ChEBI" id="CHEBI:30616"/>
        <dbReference type="ChEBI" id="CHEBI:33019"/>
        <dbReference type="ChEBI" id="CHEBI:33384"/>
        <dbReference type="ChEBI" id="CHEBI:78442"/>
        <dbReference type="ChEBI" id="CHEBI:78533"/>
        <dbReference type="ChEBI" id="CHEBI:456215"/>
        <dbReference type="EC" id="6.1.1.11"/>
    </reaction>
</comment>
<comment type="pathway">
    <text evidence="1">Aminoacyl-tRNA biosynthesis; selenocysteinyl-tRNA(Sec) biosynthesis; L-seryl-tRNA(Sec) from L-serine and tRNA(Sec): step 1/1.</text>
</comment>
<comment type="subunit">
    <text evidence="1">Homodimer. The tRNA molecule binds across the dimer.</text>
</comment>
<comment type="subcellular location">
    <subcellularLocation>
        <location evidence="1">Cytoplasm</location>
    </subcellularLocation>
</comment>
<comment type="domain">
    <text evidence="1">Consists of two distinct domains, a catalytic core and a N-terminal extension that is involved in tRNA binding.</text>
</comment>
<comment type="similarity">
    <text evidence="1">Belongs to the class-II aminoacyl-tRNA synthetase family. Type-1 seryl-tRNA synthetase subfamily.</text>
</comment>
<organism>
    <name type="scientific">Hyphomonas neptunium (strain ATCC 15444)</name>
    <dbReference type="NCBI Taxonomy" id="228405"/>
    <lineage>
        <taxon>Bacteria</taxon>
        <taxon>Pseudomonadati</taxon>
        <taxon>Pseudomonadota</taxon>
        <taxon>Alphaproteobacteria</taxon>
        <taxon>Hyphomonadales</taxon>
        <taxon>Hyphomonadaceae</taxon>
        <taxon>Hyphomonas</taxon>
    </lineage>
</organism>
<reference key="1">
    <citation type="journal article" date="2006" name="J. Bacteriol.">
        <title>Comparative genomic evidence for a close relationship between the dimorphic prosthecate bacteria Hyphomonas neptunium and Caulobacter crescentus.</title>
        <authorList>
            <person name="Badger J.H."/>
            <person name="Hoover T.R."/>
            <person name="Brun Y.V."/>
            <person name="Weiner R.M."/>
            <person name="Laub M.T."/>
            <person name="Alexandre G."/>
            <person name="Mrazek J."/>
            <person name="Ren Q."/>
            <person name="Paulsen I.T."/>
            <person name="Nelson K.E."/>
            <person name="Khouri H.M."/>
            <person name="Radune D."/>
            <person name="Sosa J."/>
            <person name="Dodson R.J."/>
            <person name="Sullivan S.A."/>
            <person name="Rosovitz M.J."/>
            <person name="Madupu R."/>
            <person name="Brinkac L.M."/>
            <person name="Durkin A.S."/>
            <person name="Daugherty S.C."/>
            <person name="Kothari S.P."/>
            <person name="Giglio M.G."/>
            <person name="Zhou L."/>
            <person name="Haft D.H."/>
            <person name="Selengut J.D."/>
            <person name="Davidsen T.M."/>
            <person name="Yang Q."/>
            <person name="Zafar N."/>
            <person name="Ward N.L."/>
        </authorList>
    </citation>
    <scope>NUCLEOTIDE SEQUENCE [LARGE SCALE GENOMIC DNA]</scope>
    <source>
        <strain>ATCC 15444</strain>
    </source>
</reference>
<sequence>MFDIRAIRDNPDAFRNAWNRRKSGLGSVVDDILKLDAQWREATTAKQDAESARNANSKLIGQAKAKKDEAEAARLMALVAEAKTTMEQAGEAEDNARKALDDLLMGLPNLPLDEVPEGSDEHGNVEQHTWGEPKLINDPKDHADLGEALKGQGGFPMMDFEAAARMSGARFVALRGKLTRLERALANFMLDLQTTEHGYEEMSVPVLVRDQALYGTGQLPKFAEDLFRTTVDHWLTPTAEVSLTNLVREQILDAAQLPLRFTAHTPCFRSEAGSAGRDTKGMIRQHQFNKVELVSIVANEAEGLAELERMTGCAEEVLKRLELPFRRMLLCTGDMGAGARKTYDLEVWLPSQNTYREISSCSYCGDFQARRMDARYRPEPKAKPEYVHTLNGSGLAVGRTLVAVLENYQNADGSITVPKALVPYMGGVEVIN</sequence>
<protein>
    <recommendedName>
        <fullName evidence="1">Serine--tRNA ligase</fullName>
        <ecNumber evidence="1">6.1.1.11</ecNumber>
    </recommendedName>
    <alternativeName>
        <fullName evidence="1">Seryl-tRNA synthetase</fullName>
        <shortName evidence="1">SerRS</shortName>
    </alternativeName>
    <alternativeName>
        <fullName evidence="1">Seryl-tRNA(Ser/Sec) synthetase</fullName>
    </alternativeName>
</protein>
<feature type="chain" id="PRO_1000019701" description="Serine--tRNA ligase">
    <location>
        <begin position="1"/>
        <end position="432"/>
    </location>
</feature>
<feature type="binding site" evidence="1">
    <location>
        <begin position="238"/>
        <end position="240"/>
    </location>
    <ligand>
        <name>L-serine</name>
        <dbReference type="ChEBI" id="CHEBI:33384"/>
    </ligand>
</feature>
<feature type="binding site" evidence="1">
    <location>
        <begin position="269"/>
        <end position="271"/>
    </location>
    <ligand>
        <name>ATP</name>
        <dbReference type="ChEBI" id="CHEBI:30616"/>
    </ligand>
</feature>
<feature type="binding site" evidence="1">
    <location>
        <position position="292"/>
    </location>
    <ligand>
        <name>L-serine</name>
        <dbReference type="ChEBI" id="CHEBI:33384"/>
    </ligand>
</feature>
<feature type="binding site" evidence="1">
    <location>
        <begin position="357"/>
        <end position="360"/>
    </location>
    <ligand>
        <name>ATP</name>
        <dbReference type="ChEBI" id="CHEBI:30616"/>
    </ligand>
</feature>
<feature type="binding site" evidence="1">
    <location>
        <position position="393"/>
    </location>
    <ligand>
        <name>L-serine</name>
        <dbReference type="ChEBI" id="CHEBI:33384"/>
    </ligand>
</feature>